<gene>
    <name evidence="1" type="primary">secB</name>
    <name type="ordered locus">XCC0203</name>
</gene>
<proteinExistence type="inferred from homology"/>
<organism>
    <name type="scientific">Xanthomonas campestris pv. campestris (strain ATCC 33913 / DSM 3586 / NCPPB 528 / LMG 568 / P 25)</name>
    <dbReference type="NCBI Taxonomy" id="190485"/>
    <lineage>
        <taxon>Bacteria</taxon>
        <taxon>Pseudomonadati</taxon>
        <taxon>Pseudomonadota</taxon>
        <taxon>Gammaproteobacteria</taxon>
        <taxon>Lysobacterales</taxon>
        <taxon>Lysobacteraceae</taxon>
        <taxon>Xanthomonas</taxon>
    </lineage>
</organism>
<comment type="function">
    <text evidence="1">One of the proteins required for the normal export of preproteins out of the cell cytoplasm. It is a molecular chaperone that binds to a subset of precursor proteins, maintaining them in a translocation-competent state. It also specifically binds to its receptor SecA.</text>
</comment>
<comment type="subunit">
    <text evidence="1">Homotetramer, a dimer of dimers. One homotetramer interacts with 1 SecA dimer.</text>
</comment>
<comment type="subcellular location">
    <subcellularLocation>
        <location evidence="1">Cytoplasm</location>
    </subcellularLocation>
</comment>
<comment type="similarity">
    <text evidence="1">Belongs to the SecB family.</text>
</comment>
<sequence length="170" mass="18059">MSDEILNGAAAPADAAAGPAFTIEKIYVKDVSFESPNAPAVFNDANQPELQLNLNQKVQRLNDNAFEVVLAVTLTCTAGGKTAYVAEVQQAGVFGLVGLEPQAIDVLLGTQCPNILFPYVRTLVSDLIQAGGFPPFYLQPINFEALYAETLRQRSQGETSLADSEPAGNA</sequence>
<name>SECB_XANCP</name>
<dbReference type="EMBL" id="AE008922">
    <property type="protein sequence ID" value="AAM39522.1"/>
    <property type="molecule type" value="Genomic_DNA"/>
</dbReference>
<dbReference type="RefSeq" id="NP_635598.1">
    <property type="nucleotide sequence ID" value="NC_003902.1"/>
</dbReference>
<dbReference type="RefSeq" id="WP_011035459.1">
    <property type="nucleotide sequence ID" value="NC_003902.1"/>
</dbReference>
<dbReference type="SMR" id="Q8PDY1"/>
<dbReference type="STRING" id="190485.XCC0203"/>
<dbReference type="EnsemblBacteria" id="AAM39522">
    <property type="protein sequence ID" value="AAM39522"/>
    <property type="gene ID" value="XCC0203"/>
</dbReference>
<dbReference type="GeneID" id="58011529"/>
<dbReference type="KEGG" id="xcc:XCC0203"/>
<dbReference type="PATRIC" id="fig|190485.4.peg.229"/>
<dbReference type="eggNOG" id="COG1952">
    <property type="taxonomic scope" value="Bacteria"/>
</dbReference>
<dbReference type="HOGENOM" id="CLU_111574_1_0_6"/>
<dbReference type="OrthoDB" id="9795145at2"/>
<dbReference type="Proteomes" id="UP000001010">
    <property type="component" value="Chromosome"/>
</dbReference>
<dbReference type="GO" id="GO:0005737">
    <property type="term" value="C:cytoplasm"/>
    <property type="evidence" value="ECO:0007669"/>
    <property type="project" value="UniProtKB-SubCell"/>
</dbReference>
<dbReference type="GO" id="GO:0051082">
    <property type="term" value="F:unfolded protein binding"/>
    <property type="evidence" value="ECO:0007669"/>
    <property type="project" value="InterPro"/>
</dbReference>
<dbReference type="GO" id="GO:0006457">
    <property type="term" value="P:protein folding"/>
    <property type="evidence" value="ECO:0007669"/>
    <property type="project" value="UniProtKB-UniRule"/>
</dbReference>
<dbReference type="GO" id="GO:0051262">
    <property type="term" value="P:protein tetramerization"/>
    <property type="evidence" value="ECO:0007669"/>
    <property type="project" value="InterPro"/>
</dbReference>
<dbReference type="GO" id="GO:0015031">
    <property type="term" value="P:protein transport"/>
    <property type="evidence" value="ECO:0007669"/>
    <property type="project" value="UniProtKB-UniRule"/>
</dbReference>
<dbReference type="Gene3D" id="3.10.420.10">
    <property type="entry name" value="SecB-like"/>
    <property type="match status" value="1"/>
</dbReference>
<dbReference type="HAMAP" id="MF_00821">
    <property type="entry name" value="SecB"/>
    <property type="match status" value="1"/>
</dbReference>
<dbReference type="InterPro" id="IPR003708">
    <property type="entry name" value="SecB"/>
</dbReference>
<dbReference type="InterPro" id="IPR035958">
    <property type="entry name" value="SecB-like_sf"/>
</dbReference>
<dbReference type="NCBIfam" id="NF004391">
    <property type="entry name" value="PRK05751.1-2"/>
    <property type="match status" value="1"/>
</dbReference>
<dbReference type="NCBIfam" id="NF004393">
    <property type="entry name" value="PRK05751.1-4"/>
    <property type="match status" value="1"/>
</dbReference>
<dbReference type="NCBIfam" id="TIGR00809">
    <property type="entry name" value="secB"/>
    <property type="match status" value="1"/>
</dbReference>
<dbReference type="PANTHER" id="PTHR36918">
    <property type="match status" value="1"/>
</dbReference>
<dbReference type="PANTHER" id="PTHR36918:SF1">
    <property type="entry name" value="PROTEIN-EXPORT PROTEIN SECB"/>
    <property type="match status" value="1"/>
</dbReference>
<dbReference type="Pfam" id="PF02556">
    <property type="entry name" value="SecB"/>
    <property type="match status" value="1"/>
</dbReference>
<dbReference type="PRINTS" id="PR01594">
    <property type="entry name" value="SECBCHAPRONE"/>
</dbReference>
<dbReference type="SUPFAM" id="SSF54611">
    <property type="entry name" value="SecB-like"/>
    <property type="match status" value="1"/>
</dbReference>
<accession>Q8PDY1</accession>
<reference key="1">
    <citation type="journal article" date="2002" name="Nature">
        <title>Comparison of the genomes of two Xanthomonas pathogens with differing host specificities.</title>
        <authorList>
            <person name="da Silva A.C.R."/>
            <person name="Ferro J.A."/>
            <person name="Reinach F.C."/>
            <person name="Farah C.S."/>
            <person name="Furlan L.R."/>
            <person name="Quaggio R.B."/>
            <person name="Monteiro-Vitorello C.B."/>
            <person name="Van Sluys M.A."/>
            <person name="Almeida N.F. Jr."/>
            <person name="Alves L.M.C."/>
            <person name="do Amaral A.M."/>
            <person name="Bertolini M.C."/>
            <person name="Camargo L.E.A."/>
            <person name="Camarotte G."/>
            <person name="Cannavan F."/>
            <person name="Cardozo J."/>
            <person name="Chambergo F."/>
            <person name="Ciapina L.P."/>
            <person name="Cicarelli R.M.B."/>
            <person name="Coutinho L.L."/>
            <person name="Cursino-Santos J.R."/>
            <person name="El-Dorry H."/>
            <person name="Faria J.B."/>
            <person name="Ferreira A.J.S."/>
            <person name="Ferreira R.C.C."/>
            <person name="Ferro M.I.T."/>
            <person name="Formighieri E.F."/>
            <person name="Franco M.C."/>
            <person name="Greggio C.C."/>
            <person name="Gruber A."/>
            <person name="Katsuyama A.M."/>
            <person name="Kishi L.T."/>
            <person name="Leite R.P."/>
            <person name="Lemos E.G.M."/>
            <person name="Lemos M.V.F."/>
            <person name="Locali E.C."/>
            <person name="Machado M.A."/>
            <person name="Madeira A.M.B.N."/>
            <person name="Martinez-Rossi N.M."/>
            <person name="Martins E.C."/>
            <person name="Meidanis J."/>
            <person name="Menck C.F.M."/>
            <person name="Miyaki C.Y."/>
            <person name="Moon D.H."/>
            <person name="Moreira L.M."/>
            <person name="Novo M.T.M."/>
            <person name="Okura V.K."/>
            <person name="Oliveira M.C."/>
            <person name="Oliveira V.R."/>
            <person name="Pereira H.A."/>
            <person name="Rossi A."/>
            <person name="Sena J.A.D."/>
            <person name="Silva C."/>
            <person name="de Souza R.F."/>
            <person name="Spinola L.A.F."/>
            <person name="Takita M.A."/>
            <person name="Tamura R.E."/>
            <person name="Teixeira E.C."/>
            <person name="Tezza R.I.D."/>
            <person name="Trindade dos Santos M."/>
            <person name="Truffi D."/>
            <person name="Tsai S.M."/>
            <person name="White F.F."/>
            <person name="Setubal J.C."/>
            <person name="Kitajima J.P."/>
        </authorList>
    </citation>
    <scope>NUCLEOTIDE SEQUENCE [LARGE SCALE GENOMIC DNA]</scope>
    <source>
        <strain>ATCC 33913 / DSM 3586 / NCPPB 528 / LMG 568 / P 25</strain>
    </source>
</reference>
<protein>
    <recommendedName>
        <fullName evidence="1">Protein-export protein SecB</fullName>
    </recommendedName>
</protein>
<feature type="chain" id="PRO_0000055428" description="Protein-export protein SecB">
    <location>
        <begin position="1"/>
        <end position="170"/>
    </location>
</feature>
<keyword id="KW-0143">Chaperone</keyword>
<keyword id="KW-0963">Cytoplasm</keyword>
<keyword id="KW-0653">Protein transport</keyword>
<keyword id="KW-1185">Reference proteome</keyword>
<keyword id="KW-0811">Translocation</keyword>
<keyword id="KW-0813">Transport</keyword>
<evidence type="ECO:0000255" key="1">
    <source>
        <dbReference type="HAMAP-Rule" id="MF_00821"/>
    </source>
</evidence>